<dbReference type="EMBL" id="CP000851">
    <property type="protein sequence ID" value="ABV85525.1"/>
    <property type="molecule type" value="Genomic_DNA"/>
</dbReference>
<dbReference type="RefSeq" id="WP_012153466.1">
    <property type="nucleotide sequence ID" value="NC_009901.1"/>
</dbReference>
<dbReference type="SMR" id="A8GYY8"/>
<dbReference type="STRING" id="398579.Spea_0196"/>
<dbReference type="KEGG" id="spl:Spea_0196"/>
<dbReference type="eggNOG" id="COG0094">
    <property type="taxonomic scope" value="Bacteria"/>
</dbReference>
<dbReference type="HOGENOM" id="CLU_061015_2_1_6"/>
<dbReference type="OrthoDB" id="9806626at2"/>
<dbReference type="Proteomes" id="UP000002608">
    <property type="component" value="Chromosome"/>
</dbReference>
<dbReference type="GO" id="GO:1990904">
    <property type="term" value="C:ribonucleoprotein complex"/>
    <property type="evidence" value="ECO:0007669"/>
    <property type="project" value="UniProtKB-KW"/>
</dbReference>
<dbReference type="GO" id="GO:0005840">
    <property type="term" value="C:ribosome"/>
    <property type="evidence" value="ECO:0007669"/>
    <property type="project" value="UniProtKB-KW"/>
</dbReference>
<dbReference type="GO" id="GO:0019843">
    <property type="term" value="F:rRNA binding"/>
    <property type="evidence" value="ECO:0007669"/>
    <property type="project" value="UniProtKB-UniRule"/>
</dbReference>
<dbReference type="GO" id="GO:0003735">
    <property type="term" value="F:structural constituent of ribosome"/>
    <property type="evidence" value="ECO:0007669"/>
    <property type="project" value="InterPro"/>
</dbReference>
<dbReference type="GO" id="GO:0000049">
    <property type="term" value="F:tRNA binding"/>
    <property type="evidence" value="ECO:0007669"/>
    <property type="project" value="UniProtKB-UniRule"/>
</dbReference>
<dbReference type="GO" id="GO:0006412">
    <property type="term" value="P:translation"/>
    <property type="evidence" value="ECO:0007669"/>
    <property type="project" value="UniProtKB-UniRule"/>
</dbReference>
<dbReference type="FunFam" id="3.30.1440.10:FF:000001">
    <property type="entry name" value="50S ribosomal protein L5"/>
    <property type="match status" value="1"/>
</dbReference>
<dbReference type="Gene3D" id="3.30.1440.10">
    <property type="match status" value="1"/>
</dbReference>
<dbReference type="HAMAP" id="MF_01333_B">
    <property type="entry name" value="Ribosomal_uL5_B"/>
    <property type="match status" value="1"/>
</dbReference>
<dbReference type="InterPro" id="IPR002132">
    <property type="entry name" value="Ribosomal_uL5"/>
</dbReference>
<dbReference type="InterPro" id="IPR020930">
    <property type="entry name" value="Ribosomal_uL5_bac-type"/>
</dbReference>
<dbReference type="InterPro" id="IPR031309">
    <property type="entry name" value="Ribosomal_uL5_C"/>
</dbReference>
<dbReference type="InterPro" id="IPR020929">
    <property type="entry name" value="Ribosomal_uL5_CS"/>
</dbReference>
<dbReference type="InterPro" id="IPR022803">
    <property type="entry name" value="Ribosomal_uL5_dom_sf"/>
</dbReference>
<dbReference type="InterPro" id="IPR031310">
    <property type="entry name" value="Ribosomal_uL5_N"/>
</dbReference>
<dbReference type="NCBIfam" id="NF000585">
    <property type="entry name" value="PRK00010.1"/>
    <property type="match status" value="1"/>
</dbReference>
<dbReference type="PANTHER" id="PTHR11994">
    <property type="entry name" value="60S RIBOSOMAL PROTEIN L11-RELATED"/>
    <property type="match status" value="1"/>
</dbReference>
<dbReference type="Pfam" id="PF00281">
    <property type="entry name" value="Ribosomal_L5"/>
    <property type="match status" value="1"/>
</dbReference>
<dbReference type="Pfam" id="PF00673">
    <property type="entry name" value="Ribosomal_L5_C"/>
    <property type="match status" value="1"/>
</dbReference>
<dbReference type="PIRSF" id="PIRSF002161">
    <property type="entry name" value="Ribosomal_L5"/>
    <property type="match status" value="1"/>
</dbReference>
<dbReference type="SUPFAM" id="SSF55282">
    <property type="entry name" value="RL5-like"/>
    <property type="match status" value="1"/>
</dbReference>
<dbReference type="PROSITE" id="PS00358">
    <property type="entry name" value="RIBOSOMAL_L5"/>
    <property type="match status" value="1"/>
</dbReference>
<protein>
    <recommendedName>
        <fullName evidence="1">Large ribosomal subunit protein uL5</fullName>
    </recommendedName>
    <alternativeName>
        <fullName evidence="2">50S ribosomal protein L5</fullName>
    </alternativeName>
</protein>
<keyword id="KW-1185">Reference proteome</keyword>
<keyword id="KW-0687">Ribonucleoprotein</keyword>
<keyword id="KW-0689">Ribosomal protein</keyword>
<keyword id="KW-0694">RNA-binding</keyword>
<keyword id="KW-0699">rRNA-binding</keyword>
<keyword id="KW-0820">tRNA-binding</keyword>
<accession>A8GYY8</accession>
<name>RL5_SHEPA</name>
<organism>
    <name type="scientific">Shewanella pealeana (strain ATCC 700345 / ANG-SQ1)</name>
    <dbReference type="NCBI Taxonomy" id="398579"/>
    <lineage>
        <taxon>Bacteria</taxon>
        <taxon>Pseudomonadati</taxon>
        <taxon>Pseudomonadota</taxon>
        <taxon>Gammaproteobacteria</taxon>
        <taxon>Alteromonadales</taxon>
        <taxon>Shewanellaceae</taxon>
        <taxon>Shewanella</taxon>
    </lineage>
</organism>
<evidence type="ECO:0000255" key="1">
    <source>
        <dbReference type="HAMAP-Rule" id="MF_01333"/>
    </source>
</evidence>
<evidence type="ECO:0000305" key="2"/>
<reference key="1">
    <citation type="submission" date="2007-10" db="EMBL/GenBank/DDBJ databases">
        <title>Complete sequence of Shewanella pealeana ATCC 700345.</title>
        <authorList>
            <consortium name="US DOE Joint Genome Institute"/>
            <person name="Copeland A."/>
            <person name="Lucas S."/>
            <person name="Lapidus A."/>
            <person name="Barry K."/>
            <person name="Glavina del Rio T."/>
            <person name="Dalin E."/>
            <person name="Tice H."/>
            <person name="Pitluck S."/>
            <person name="Chertkov O."/>
            <person name="Brettin T."/>
            <person name="Bruce D."/>
            <person name="Detter J.C."/>
            <person name="Han C."/>
            <person name="Schmutz J."/>
            <person name="Larimer F."/>
            <person name="Land M."/>
            <person name="Hauser L."/>
            <person name="Kyrpides N."/>
            <person name="Kim E."/>
            <person name="Zhao J.-S.Z."/>
            <person name="Manno D."/>
            <person name="Hawari J."/>
            <person name="Richardson P."/>
        </authorList>
    </citation>
    <scope>NUCLEOTIDE SEQUENCE [LARGE SCALE GENOMIC DNA]</scope>
    <source>
        <strain>ATCC 700345 / ANG-SQ1</strain>
    </source>
</reference>
<gene>
    <name evidence="1" type="primary">rplE</name>
    <name type="ordered locus">Spea_0196</name>
</gene>
<feature type="chain" id="PRO_1000086609" description="Large ribosomal subunit protein uL5">
    <location>
        <begin position="1"/>
        <end position="179"/>
    </location>
</feature>
<comment type="function">
    <text evidence="1">This is one of the proteins that bind and probably mediate the attachment of the 5S RNA into the large ribosomal subunit, where it forms part of the central protuberance. In the 70S ribosome it contacts protein S13 of the 30S subunit (bridge B1b), connecting the 2 subunits; this bridge is implicated in subunit movement. Contacts the P site tRNA; the 5S rRNA and some of its associated proteins might help stabilize positioning of ribosome-bound tRNAs.</text>
</comment>
<comment type="subunit">
    <text evidence="1">Part of the 50S ribosomal subunit; part of the 5S rRNA/L5/L18/L25 subcomplex. Contacts the 5S rRNA and the P site tRNA. Forms a bridge to the 30S subunit in the 70S ribosome.</text>
</comment>
<comment type="similarity">
    <text evidence="1">Belongs to the universal ribosomal protein uL5 family.</text>
</comment>
<sequence>MAKLHDKYKETVSPELVTKFGFTSVMQVPRIEKITLNMGVGEAVADKKVMEHALRDMTAIAGQKPVVTVARKSVAGFKIREGYPIGCKVTLRGERMWEFLERLVDIAIPRIRDFRGLSVKSFDGRGNYAMGVREQIIFPEIQYDKIDKIRGMDIVITTSAKNDEEGRALLEGFNFPFKK</sequence>
<proteinExistence type="inferred from homology"/>